<sequence length="203" mass="22356">METLSQDSLLECQICFNYYSPRRRPKLLDCKHTCCSVCLQQMRTSQKDVRCPWCRGITKLPPGFSVSQLPDDPEVLAVIAIPHTSEHTPVFIKLPSNGCYMLPLPISKERTLLPGDMGCRLLPGSQQKSLTVVTIPAEQQPLQGGAPQEAVEEEPDRRGVAKSSTWSGVCTVILVACVLVFLLGIVLHNMSCISKRFTVISCG</sequence>
<protein>
    <recommendedName>
        <fullName evidence="6">E3 ubiquitin-protein ligase RNF152</fullName>
        <ecNumber evidence="2">2.3.2.27</ecNumber>
    </recommendedName>
    <alternativeName>
        <fullName evidence="7">RING finger protein 152</fullName>
    </alternativeName>
    <alternativeName>
        <fullName evidence="6">RING-type E3 ubiquitin transferase RNF152</fullName>
    </alternativeName>
</protein>
<gene>
    <name evidence="7" type="primary">Rnf152</name>
</gene>
<feature type="chain" id="PRO_0000405835" description="E3 ubiquitin-protein ligase RNF152">
    <location>
        <begin position="1"/>
        <end position="203"/>
    </location>
</feature>
<feature type="transmembrane region" description="Helical" evidence="3">
    <location>
        <begin position="167"/>
        <end position="187"/>
    </location>
</feature>
<feature type="zinc finger region" description="RING-type" evidence="4">
    <location>
        <begin position="12"/>
        <end position="55"/>
    </location>
</feature>
<feature type="region of interest" description="Necessary for interaction with RRAGA" evidence="2">
    <location>
        <begin position="106"/>
        <end position="165"/>
    </location>
</feature>
<feature type="region of interest" description="Disordered" evidence="5">
    <location>
        <begin position="140"/>
        <end position="159"/>
    </location>
</feature>
<evidence type="ECO:0000250" key="1">
    <source>
        <dbReference type="UniProtKB" id="Q8BG47"/>
    </source>
</evidence>
<evidence type="ECO:0000250" key="2">
    <source>
        <dbReference type="UniProtKB" id="Q8N8N0"/>
    </source>
</evidence>
<evidence type="ECO:0000255" key="3"/>
<evidence type="ECO:0000255" key="4">
    <source>
        <dbReference type="PROSITE-ProRule" id="PRU00175"/>
    </source>
</evidence>
<evidence type="ECO:0000256" key="5">
    <source>
        <dbReference type="SAM" id="MobiDB-lite"/>
    </source>
</evidence>
<evidence type="ECO:0000305" key="6"/>
<evidence type="ECO:0000312" key="7">
    <source>
        <dbReference type="RGD" id="1305251"/>
    </source>
</evidence>
<accession>D4A723</accession>
<dbReference type="EC" id="2.3.2.27" evidence="2"/>
<dbReference type="EMBL" id="CH474000">
    <property type="protein sequence ID" value="EDL91732.1"/>
    <property type="molecule type" value="Genomic_DNA"/>
</dbReference>
<dbReference type="RefSeq" id="NP_001099775.1">
    <property type="nucleotide sequence ID" value="NM_001106305.3"/>
</dbReference>
<dbReference type="RefSeq" id="NP_001416908.1">
    <property type="nucleotide sequence ID" value="NM_001429979.1"/>
</dbReference>
<dbReference type="RefSeq" id="XP_017454255.1">
    <property type="nucleotide sequence ID" value="XM_017598766.1"/>
</dbReference>
<dbReference type="RefSeq" id="XP_017454256.1">
    <property type="nucleotide sequence ID" value="XM_017598767.3"/>
</dbReference>
<dbReference type="RefSeq" id="XP_017454257.1">
    <property type="nucleotide sequence ID" value="XM_017598768.3"/>
</dbReference>
<dbReference type="RefSeq" id="XP_017454258.1">
    <property type="nucleotide sequence ID" value="XM_017598769.3"/>
</dbReference>
<dbReference type="RefSeq" id="XP_017454259.1">
    <property type="nucleotide sequence ID" value="XM_017598770.1"/>
</dbReference>
<dbReference type="SMR" id="D4A723"/>
<dbReference type="FunCoup" id="D4A723">
    <property type="interactions" value="100"/>
</dbReference>
<dbReference type="STRING" id="10116.ENSRNOP00000019921"/>
<dbReference type="PhosphoSitePlus" id="D4A723"/>
<dbReference type="PaxDb" id="10116-ENSRNOP00000019921"/>
<dbReference type="Ensembl" id="ENSRNOT00000019921.6">
    <property type="protein sequence ID" value="ENSRNOP00000019921.4"/>
    <property type="gene ID" value="ENSRNOG00000014859.6"/>
</dbReference>
<dbReference type="Ensembl" id="ENSRNOT00000102604.1">
    <property type="protein sequence ID" value="ENSRNOP00000093936.1"/>
    <property type="gene ID" value="ENSRNOG00000014859.6"/>
</dbReference>
<dbReference type="Ensembl" id="ENSRNOT00000105259.1">
    <property type="protein sequence ID" value="ENSRNOP00000091301.1"/>
    <property type="gene ID" value="ENSRNOG00000014859.6"/>
</dbReference>
<dbReference type="Ensembl" id="ENSRNOT00000105662.1">
    <property type="protein sequence ID" value="ENSRNOP00000097172.1"/>
    <property type="gene ID" value="ENSRNOG00000014859.6"/>
</dbReference>
<dbReference type="Ensembl" id="ENSRNOT00000107961.1">
    <property type="protein sequence ID" value="ENSRNOP00000095982.1"/>
    <property type="gene ID" value="ENSRNOG00000014859.6"/>
</dbReference>
<dbReference type="Ensembl" id="ENSRNOT00000119715.1">
    <property type="protein sequence ID" value="ENSRNOP00000093523.1"/>
    <property type="gene ID" value="ENSRNOG00000014859.6"/>
</dbReference>
<dbReference type="GeneID" id="293561"/>
<dbReference type="KEGG" id="rno:293561"/>
<dbReference type="UCSC" id="RGD:1305251">
    <property type="organism name" value="rat"/>
</dbReference>
<dbReference type="AGR" id="RGD:1305251"/>
<dbReference type="CTD" id="220441"/>
<dbReference type="RGD" id="1305251">
    <property type="gene designation" value="Rnf152"/>
</dbReference>
<dbReference type="eggNOG" id="KOG2177">
    <property type="taxonomic scope" value="Eukaryota"/>
</dbReference>
<dbReference type="GeneTree" id="ENSGT00730000111317"/>
<dbReference type="HOGENOM" id="CLU_1414689_0_0_1"/>
<dbReference type="InParanoid" id="D4A723"/>
<dbReference type="OMA" id="REIRCPW"/>
<dbReference type="OrthoDB" id="6106880at2759"/>
<dbReference type="PhylomeDB" id="D4A723"/>
<dbReference type="TreeFam" id="TF331690"/>
<dbReference type="UniPathway" id="UPA00143"/>
<dbReference type="PRO" id="PR:D4A723"/>
<dbReference type="Proteomes" id="UP000002494">
    <property type="component" value="Chromosome 13"/>
</dbReference>
<dbReference type="Proteomes" id="UP000234681">
    <property type="component" value="Chromosome 13"/>
</dbReference>
<dbReference type="Bgee" id="ENSRNOG00000014859">
    <property type="expression patterns" value="Expressed in duodenum and 14 other cell types or tissues"/>
</dbReference>
<dbReference type="GO" id="GO:0005765">
    <property type="term" value="C:lysosomal membrane"/>
    <property type="evidence" value="ECO:0000250"/>
    <property type="project" value="UniProtKB"/>
</dbReference>
<dbReference type="GO" id="GO:0005764">
    <property type="term" value="C:lysosome"/>
    <property type="evidence" value="ECO:0000250"/>
    <property type="project" value="UniProtKB"/>
</dbReference>
<dbReference type="GO" id="GO:0031090">
    <property type="term" value="C:organelle membrane"/>
    <property type="evidence" value="ECO:0000250"/>
    <property type="project" value="UniProtKB"/>
</dbReference>
<dbReference type="GO" id="GO:0031267">
    <property type="term" value="F:small GTPase binding"/>
    <property type="evidence" value="ECO:0000266"/>
    <property type="project" value="RGD"/>
</dbReference>
<dbReference type="GO" id="GO:0061630">
    <property type="term" value="F:ubiquitin protein ligase activity"/>
    <property type="evidence" value="ECO:0000266"/>
    <property type="project" value="RGD"/>
</dbReference>
<dbReference type="GO" id="GO:0004842">
    <property type="term" value="F:ubiquitin-protein transferase activity"/>
    <property type="evidence" value="ECO:0000250"/>
    <property type="project" value="UniProtKB"/>
</dbReference>
<dbReference type="GO" id="GO:0008270">
    <property type="term" value="F:zinc ion binding"/>
    <property type="evidence" value="ECO:0007669"/>
    <property type="project" value="UniProtKB-KW"/>
</dbReference>
<dbReference type="GO" id="GO:0006915">
    <property type="term" value="P:apoptotic process"/>
    <property type="evidence" value="ECO:0007669"/>
    <property type="project" value="UniProtKB-KW"/>
</dbReference>
<dbReference type="GO" id="GO:0034198">
    <property type="term" value="P:cellular response to amino acid starvation"/>
    <property type="evidence" value="ECO:0000250"/>
    <property type="project" value="UniProtKB"/>
</dbReference>
<dbReference type="GO" id="GO:1904262">
    <property type="term" value="P:negative regulation of TORC1 signaling"/>
    <property type="evidence" value="ECO:0000250"/>
    <property type="project" value="UniProtKB"/>
</dbReference>
<dbReference type="GO" id="GO:0010508">
    <property type="term" value="P:positive regulation of autophagy"/>
    <property type="evidence" value="ECO:0000250"/>
    <property type="project" value="UniProtKB"/>
</dbReference>
<dbReference type="GO" id="GO:0070936">
    <property type="term" value="P:protein K48-linked ubiquitination"/>
    <property type="evidence" value="ECO:0000250"/>
    <property type="project" value="UniProtKB"/>
</dbReference>
<dbReference type="GO" id="GO:0070534">
    <property type="term" value="P:protein K63-linked ubiquitination"/>
    <property type="evidence" value="ECO:0000250"/>
    <property type="project" value="UniProtKB"/>
</dbReference>
<dbReference type="GO" id="GO:0006513">
    <property type="term" value="P:protein monoubiquitination"/>
    <property type="evidence" value="ECO:0000250"/>
    <property type="project" value="UniProtKB"/>
</dbReference>
<dbReference type="CDD" id="cd16548">
    <property type="entry name" value="RING-HC_RNF152"/>
    <property type="match status" value="1"/>
</dbReference>
<dbReference type="FunFam" id="3.30.40.10:FF:000197">
    <property type="entry name" value="E3 ubiquitin-protein ligase RNF152"/>
    <property type="match status" value="1"/>
</dbReference>
<dbReference type="Gene3D" id="3.30.40.10">
    <property type="entry name" value="Zinc/RING finger domain, C3HC4 (zinc finger)"/>
    <property type="match status" value="1"/>
</dbReference>
<dbReference type="InterPro" id="IPR033609">
    <property type="entry name" value="RING_RNF152"/>
</dbReference>
<dbReference type="InterPro" id="IPR045744">
    <property type="entry name" value="RNF152_C"/>
</dbReference>
<dbReference type="InterPro" id="IPR001841">
    <property type="entry name" value="Znf_RING"/>
</dbReference>
<dbReference type="InterPro" id="IPR013083">
    <property type="entry name" value="Znf_RING/FYVE/PHD"/>
</dbReference>
<dbReference type="PANTHER" id="PTHR25464:SF1">
    <property type="entry name" value="E3 UBIQUITIN-PROTEIN LIGASE RNF152"/>
    <property type="match status" value="1"/>
</dbReference>
<dbReference type="PANTHER" id="PTHR25464">
    <property type="entry name" value="TRIPARTITE MOTIF-CONTAINING PROTEIN 2-LIKE PROTEIN"/>
    <property type="match status" value="1"/>
</dbReference>
<dbReference type="Pfam" id="PF19325">
    <property type="entry name" value="RNF152_C"/>
    <property type="match status" value="1"/>
</dbReference>
<dbReference type="Pfam" id="PF14634">
    <property type="entry name" value="zf-RING_5"/>
    <property type="match status" value="1"/>
</dbReference>
<dbReference type="SMART" id="SM00184">
    <property type="entry name" value="RING"/>
    <property type="match status" value="1"/>
</dbReference>
<dbReference type="SUPFAM" id="SSF57850">
    <property type="entry name" value="RING/U-box"/>
    <property type="match status" value="1"/>
</dbReference>
<dbReference type="PROSITE" id="PS50089">
    <property type="entry name" value="ZF_RING_2"/>
    <property type="match status" value="1"/>
</dbReference>
<reference key="1">
    <citation type="submission" date="2005-07" db="EMBL/GenBank/DDBJ databases">
        <authorList>
            <person name="Mural R.J."/>
            <person name="Adams M.D."/>
            <person name="Myers E.W."/>
            <person name="Smith H.O."/>
            <person name="Venter J.C."/>
        </authorList>
    </citation>
    <scope>NUCLEOTIDE SEQUENCE [LARGE SCALE GENOMIC DNA]</scope>
    <source>
        <strain>Brown Norway</strain>
    </source>
</reference>
<keyword id="KW-0053">Apoptosis</keyword>
<keyword id="KW-0458">Lysosome</keyword>
<keyword id="KW-0472">Membrane</keyword>
<keyword id="KW-0479">Metal-binding</keyword>
<keyword id="KW-1185">Reference proteome</keyword>
<keyword id="KW-0808">Transferase</keyword>
<keyword id="KW-0812">Transmembrane</keyword>
<keyword id="KW-1133">Transmembrane helix</keyword>
<keyword id="KW-0832">Ubl conjugation</keyword>
<keyword id="KW-0833">Ubl conjugation pathway</keyword>
<keyword id="KW-0862">Zinc</keyword>
<keyword id="KW-0863">Zinc-finger</keyword>
<proteinExistence type="inferred from homology"/>
<name>RN152_RAT</name>
<comment type="function">
    <text evidence="2">E3 ubiquitin-protein ligase that acts as a negative regulator of mTORC1 signaling by mediating ubiquitination of RagA/RRAGA and RHEB. Catalyzes 'Lys-63'-linked polyubiquitination of RagA/RRAGA in response to amino acid starvation, thereby regulating mTORC1 signaling. Also mediates monoubiquitination of RHEB, promoting its association with the TSC-TBC complex and subsequent inhibition. Also mediates 'Lys-48'-linked polyubiquitination of target proteins and their subsequent targeting to the proteasome for degradation. Induces apoptosis when overexpressed.</text>
</comment>
<comment type="catalytic activity">
    <reaction evidence="2">
        <text>S-ubiquitinyl-[E2 ubiquitin-conjugating enzyme]-L-cysteine + [acceptor protein]-L-lysine = [E2 ubiquitin-conjugating enzyme]-L-cysteine + N(6)-ubiquitinyl-[acceptor protein]-L-lysine.</text>
        <dbReference type="EC" id="2.3.2.27"/>
    </reaction>
</comment>
<comment type="pathway">
    <text evidence="2">Protein modification; protein ubiquitination.</text>
</comment>
<comment type="subunit">
    <text evidence="1 2">Interacts with RRAGA (inactive GDP-bound form); stimulated by amino acid starvation. Interacts with SEC16A.</text>
</comment>
<comment type="subcellular location">
    <subcellularLocation>
        <location evidence="2">Lysosome membrane</location>
        <topology evidence="2">Single-pass membrane protein</topology>
    </subcellularLocation>
</comment>
<comment type="PTM">
    <text evidence="2">Ubiquitinated. Autoubiquitinated in vitro, leading to its degradation by the proteasome.</text>
</comment>
<comment type="similarity">
    <text evidence="6">Belongs to the RNF152 family.</text>
</comment>
<organism>
    <name type="scientific">Rattus norvegicus</name>
    <name type="common">Rat</name>
    <dbReference type="NCBI Taxonomy" id="10116"/>
    <lineage>
        <taxon>Eukaryota</taxon>
        <taxon>Metazoa</taxon>
        <taxon>Chordata</taxon>
        <taxon>Craniata</taxon>
        <taxon>Vertebrata</taxon>
        <taxon>Euteleostomi</taxon>
        <taxon>Mammalia</taxon>
        <taxon>Eutheria</taxon>
        <taxon>Euarchontoglires</taxon>
        <taxon>Glires</taxon>
        <taxon>Rodentia</taxon>
        <taxon>Myomorpha</taxon>
        <taxon>Muroidea</taxon>
        <taxon>Muridae</taxon>
        <taxon>Murinae</taxon>
        <taxon>Rattus</taxon>
    </lineage>
</organism>